<evidence type="ECO:0000250" key="1"/>
<evidence type="ECO:0000255" key="2">
    <source>
        <dbReference type="PROSITE-ProRule" id="PRU00464"/>
    </source>
</evidence>
<evidence type="ECO:0000256" key="3">
    <source>
        <dbReference type="SAM" id="MobiDB-lite"/>
    </source>
</evidence>
<evidence type="ECO:0000305" key="4"/>
<reference key="1">
    <citation type="journal article" date="2009" name="Genome Res.">
        <title>Genome structure of a Saccharomyces cerevisiae strain widely used in bioethanol production.</title>
        <authorList>
            <person name="Argueso J.L."/>
            <person name="Carazzolle M.F."/>
            <person name="Mieczkowski P.A."/>
            <person name="Duarte F.M."/>
            <person name="Netto O.V.C."/>
            <person name="Missawa S.K."/>
            <person name="Galzerani F."/>
            <person name="Costa G.G.L."/>
            <person name="Vidal R.O."/>
            <person name="Noronha M.F."/>
            <person name="Dominska M."/>
            <person name="Andrietta M.G.S."/>
            <person name="Andrietta S.R."/>
            <person name="Cunha A.F."/>
            <person name="Gomes L.H."/>
            <person name="Tavares F.C.A."/>
            <person name="Alcarde A.R."/>
            <person name="Dietrich F.S."/>
            <person name="McCusker J.H."/>
            <person name="Petes T.D."/>
            <person name="Pereira G.A.G."/>
        </authorList>
    </citation>
    <scope>NUCLEOTIDE SEQUENCE [LARGE SCALE GENOMIC DNA]</scope>
    <source>
        <strain>JAY291</strain>
    </source>
</reference>
<organism>
    <name type="scientific">Saccharomyces cerevisiae (strain JAY291)</name>
    <name type="common">Baker's yeast</name>
    <dbReference type="NCBI Taxonomy" id="574961"/>
    <lineage>
        <taxon>Eukaryota</taxon>
        <taxon>Fungi</taxon>
        <taxon>Dikarya</taxon>
        <taxon>Ascomycota</taxon>
        <taxon>Saccharomycotina</taxon>
        <taxon>Saccharomycetes</taxon>
        <taxon>Saccharomycetales</taxon>
        <taxon>Saccharomycetaceae</taxon>
        <taxon>Saccharomyces</taxon>
    </lineage>
</organism>
<accession>C7GQV5</accession>
<gene>
    <name type="primary">HNT2</name>
    <name type="synonym">APH1</name>
    <name type="ORF">C1Q_02699</name>
</gene>
<sequence>MNKPIYFSKFLVTEQVFYKSKYTYALVNLKPIVPGHVLIVPLRTTVLNLSDLTMPESQDYFKTLQLIHRFIKWQYKADSINVAIQDGPEAGQSVPHLHTHIIPRYKINNVGDLIYDKLDHWDGNGTLTDWQGRRDEYLGVGGRQARKNNSTSATVDGDELSQGPNVLKPDSQRKVRALTEMKKEAEDLQARLEEFVSSDPGLTQWL</sequence>
<feature type="chain" id="PRO_0000392104" description="Bis(5'-adenosyl)-triphosphatase">
    <location>
        <begin position="1"/>
        <end position="206"/>
    </location>
</feature>
<feature type="domain" description="HIT" evidence="2">
    <location>
        <begin position="3"/>
        <end position="115"/>
    </location>
</feature>
<feature type="region of interest" description="Disordered" evidence="3">
    <location>
        <begin position="143"/>
        <end position="164"/>
    </location>
</feature>
<feature type="short sequence motif" description="Histidine triad motif">
    <location>
        <begin position="96"/>
        <end position="100"/>
    </location>
</feature>
<feature type="active site" description="Tele-AMP-histidine intermediate" evidence="1">
    <location>
        <position position="98"/>
    </location>
</feature>
<keyword id="KW-0963">Cytoplasm</keyword>
<keyword id="KW-0378">Hydrolase</keyword>
<keyword id="KW-0496">Mitochondrion</keyword>
<keyword id="KW-0547">Nucleotide-binding</keyword>
<keyword id="KW-0539">Nucleus</keyword>
<dbReference type="EC" id="3.6.1.29"/>
<dbReference type="EMBL" id="ACFL01000130">
    <property type="protein sequence ID" value="EEU06813.1"/>
    <property type="status" value="ALT_INIT"/>
    <property type="molecule type" value="Genomic_DNA"/>
</dbReference>
<dbReference type="SMR" id="C7GQV5"/>
<dbReference type="OrthoDB" id="13869at4893"/>
<dbReference type="Proteomes" id="UP000008073">
    <property type="component" value="Unassembled WGS sequence"/>
</dbReference>
<dbReference type="GO" id="GO:0005739">
    <property type="term" value="C:mitochondrion"/>
    <property type="evidence" value="ECO:0007669"/>
    <property type="project" value="UniProtKB-SubCell"/>
</dbReference>
<dbReference type="GO" id="GO:0005634">
    <property type="term" value="C:nucleus"/>
    <property type="evidence" value="ECO:0007669"/>
    <property type="project" value="UniProtKB-SubCell"/>
</dbReference>
<dbReference type="GO" id="GO:0047710">
    <property type="term" value="F:bis(5'-adenosyl)-triphosphatase activity"/>
    <property type="evidence" value="ECO:0007669"/>
    <property type="project" value="UniProtKB-EC"/>
</dbReference>
<dbReference type="GO" id="GO:0000166">
    <property type="term" value="F:nucleotide binding"/>
    <property type="evidence" value="ECO:0007669"/>
    <property type="project" value="UniProtKB-KW"/>
</dbReference>
<dbReference type="CDD" id="cd01275">
    <property type="entry name" value="FHIT"/>
    <property type="match status" value="1"/>
</dbReference>
<dbReference type="Gene3D" id="3.30.428.10">
    <property type="entry name" value="HIT-like"/>
    <property type="match status" value="1"/>
</dbReference>
<dbReference type="InterPro" id="IPR051884">
    <property type="entry name" value="Bis(5'-adenosyl)-TPase_reg"/>
</dbReference>
<dbReference type="InterPro" id="IPR039383">
    <property type="entry name" value="FHIT"/>
</dbReference>
<dbReference type="InterPro" id="IPR019808">
    <property type="entry name" value="Histidine_triad_CS"/>
</dbReference>
<dbReference type="InterPro" id="IPR011146">
    <property type="entry name" value="HIT-like"/>
</dbReference>
<dbReference type="InterPro" id="IPR036265">
    <property type="entry name" value="HIT-like_sf"/>
</dbReference>
<dbReference type="PANTHER" id="PTHR46243">
    <property type="entry name" value="BIS(5'-ADENOSYL)-TRIPHOSPHATASE"/>
    <property type="match status" value="1"/>
</dbReference>
<dbReference type="PANTHER" id="PTHR46243:SF1">
    <property type="entry name" value="BIS(5'-ADENOSYL)-TRIPHOSPHATASE"/>
    <property type="match status" value="1"/>
</dbReference>
<dbReference type="Pfam" id="PF01230">
    <property type="entry name" value="HIT"/>
    <property type="match status" value="1"/>
</dbReference>
<dbReference type="SUPFAM" id="SSF54197">
    <property type="entry name" value="HIT-like"/>
    <property type="match status" value="1"/>
</dbReference>
<dbReference type="PROSITE" id="PS00892">
    <property type="entry name" value="HIT_1"/>
    <property type="match status" value="1"/>
</dbReference>
<dbReference type="PROSITE" id="PS51084">
    <property type="entry name" value="HIT_2"/>
    <property type="match status" value="1"/>
</dbReference>
<comment type="function">
    <text evidence="1">Cleaves A-5'-PPP-5'A to yield AMP and ADP. Can cleave all dinucleoside polyphosphates, provided the phosphate chain contains at least 3 phosphates and that 1 of the 2 bases composing the nucleotide is a purine. Is most effective on dinucleoside triphosphates. Negatively regulates intracellular dinucleoside polyphosphate levels, which elevate following heat shock (By similarity).</text>
</comment>
<comment type="catalytic activity">
    <reaction>
        <text>P(1),P(3)-bis(5'-adenosyl) triphosphate + H2O = AMP + ADP + 2 H(+)</text>
        <dbReference type="Rhea" id="RHEA:13893"/>
        <dbReference type="ChEBI" id="CHEBI:15377"/>
        <dbReference type="ChEBI" id="CHEBI:15378"/>
        <dbReference type="ChEBI" id="CHEBI:58529"/>
        <dbReference type="ChEBI" id="CHEBI:456215"/>
        <dbReference type="ChEBI" id="CHEBI:456216"/>
        <dbReference type="EC" id="3.6.1.29"/>
    </reaction>
</comment>
<comment type="cofactor">
    <cofactor evidence="1">
        <name>Mn(2+)</name>
        <dbReference type="ChEBI" id="CHEBI:29035"/>
    </cofactor>
    <text evidence="1">Divalent metal cations. Mn(2+) is the preferred ion.</text>
</comment>
<comment type="subunit">
    <text evidence="1">Homodimer.</text>
</comment>
<comment type="subcellular location">
    <subcellularLocation>
        <location evidence="1">Cytoplasm</location>
    </subcellularLocation>
    <subcellularLocation>
        <location evidence="1">Nucleus</location>
    </subcellularLocation>
    <subcellularLocation>
        <location evidence="1">Mitochondrion</location>
    </subcellularLocation>
</comment>
<comment type="sequence caution" evidence="4">
    <conflict type="erroneous initiation">
        <sequence resource="EMBL-CDS" id="EEU06813"/>
    </conflict>
</comment>
<name>HNT2_YEAS2</name>
<proteinExistence type="inferred from homology"/>
<protein>
    <recommendedName>
        <fullName>Bis(5'-adenosyl)-triphosphatase</fullName>
        <ecNumber>3.6.1.29</ecNumber>
    </recommendedName>
    <alternativeName>
        <fullName>AP3A hydrolase</fullName>
        <shortName>AP3Aase</shortName>
    </alternativeName>
    <alternativeName>
        <fullName>Diadenosine 5',5'''-P1,P3-triphosphate hydrolase</fullName>
    </alternativeName>
    <alternativeName>
        <fullName>Dinucleosidetriphosphatase</fullName>
    </alternativeName>
    <alternativeName>
        <fullName>Hit family protein 2</fullName>
    </alternativeName>
</protein>